<comment type="function">
    <text evidence="1 8">Required for the initiation of starch granules biosynthesis in leaf chloroplasts (By similarity). Anchored to the thylakoid membranes with its C-terminus facing into the stroma where it is essential for localizing PTST2 and SS4 to the stromal spaces between the thylakoid membranes in order to begin starch granule formation (By similarity). Associated with leaf chloroplastic nucleoids in vivo (By similarity). Binds to various chloroplastic double-stranded DNA fragments without particular sequence specificity in vitro (By similarity). May function at the interface between nucleoids and thylakoids possibly by anchoring nucleoids to the thylakoid membrane system in mature chloroplasts (By similarity). Binds nuclear DNA (PubMed:8953774). Interacts with chromatin via matrix attachment regions (MARs) (PubMed:8953774). Likely to participate in nuclear architecture by connecting chromatin with the nuclear matrix and potentially with the nuclear envelope (PubMed:8953774).</text>
</comment>
<comment type="subunit">
    <text evidence="1 5">Interacts with MAF1 (PubMed:10488241). Interacts with PTST2; the interaction is essential for the initiation of starch granules biosynthesis in leaf chloroplasts, for the correct location of the process in the stromal spaces between the thylakoid membranes, and for the association of PTST2 with the thylakoid membranes (By similarity).</text>
</comment>
<comment type="interaction">
    <interactant intactId="EBI-1112526">
        <id>P93203</id>
    </interactant>
    <interactant intactId="EBI-1112534">
        <id>Q9M7N6</id>
        <label>MAF1</label>
    </interactant>
    <organismsDiffer>false</organismsDiffer>
    <experiments>4</experiments>
</comment>
<comment type="subcellular location">
    <subcellularLocation>
        <location evidence="3 7">Plastid</location>
        <location evidence="3 7">Chloroplast</location>
    </subcellularLocation>
    <subcellularLocation>
        <location evidence="7">Plastid</location>
        <location evidence="7">Chloroplast thylakoid membrane</location>
        <topology evidence="3">Single-pass membrane protein</topology>
        <orientation evidence="2">Stromal side</orientation>
    </subcellularLocation>
    <subcellularLocation>
        <location evidence="2">Plastid</location>
        <location evidence="2">Chloroplast stroma</location>
        <location evidence="2">Chloroplast nucleoid</location>
    </subcellularLocation>
    <subcellularLocation>
        <location evidence="7 8">Nucleus</location>
    </subcellularLocation>
    <subcellularLocation>
        <location evidence="7 8">Nucleus matrix</location>
    </subcellularLocation>
    <text evidence="1 2">Is in the membrane-bound (insoluble) protein fraction of the leaves. Forms punctate structures within the chloroplasts of epidermal mature leaf cells and isolated mesophyll protoplasts. Distributed throughout chloroplasts locating to small patches (By similarity). Associates with thylakoid membranes in mature leaf chloroplasts. Has a direct physical interaction with nucleoids in mature leaf chloroplasts (By similarity).</text>
</comment>
<comment type="developmental stage">
    <text evidence="6">Expressed in green tomato fruits coincident with an abundance of photosynthetic membranes (at protein level). Expression diminishes during fruit ripening when the photosynthetic membranes break down (at protein level). No expression coincident with chloroplasts transition to chromoplasts (at protein level).</text>
</comment>
<comment type="domain">
    <text evidence="8">The C-terminal part (439-697) is necessary for DNA-binding.</text>
</comment>
<comment type="PTM">
    <text evidence="8">Phosphorylated in vitro by human casein kinase II.</text>
</comment>
<comment type="PTM">
    <text evidence="1">Predicted to be translocated into the thylakoid by the Tat system.</text>
</comment>
<name>MFP1_SOLLC</name>
<keyword id="KW-0150">Chloroplast</keyword>
<keyword id="KW-0175">Coiled coil</keyword>
<keyword id="KW-0238">DNA-binding</keyword>
<keyword id="KW-0472">Membrane</keyword>
<keyword id="KW-0539">Nucleus</keyword>
<keyword id="KW-0934">Plastid</keyword>
<keyword id="KW-1185">Reference proteome</keyword>
<keyword id="KW-0750">Starch biosynthesis</keyword>
<keyword id="KW-0793">Thylakoid</keyword>
<keyword id="KW-0809">Transit peptide</keyword>
<keyword id="KW-0812">Transmembrane</keyword>
<keyword id="KW-1133">Transmembrane helix</keyword>
<accession>P93203</accession>
<reference key="1">
    <citation type="journal article" date="1996" name="Plant Cell">
        <title>MFP1, a novel plant filament-like protein with affinity for matrix attachment region DNA.</title>
        <authorList>
            <person name="Meier I."/>
            <person name="Phelan T."/>
            <person name="Gruissem W."/>
            <person name="Spiker S."/>
            <person name="Schneider D."/>
        </authorList>
    </citation>
    <scope>NUCLEOTIDE SEQUENCE [MRNA]</scope>
    <scope>FUNCTION</scope>
    <scope>SUBCELLULAR LOCATION</scope>
    <scope>DOMAIN</scope>
    <scope>PTM</scope>
    <scope>MUTAGENESIS OF 1-MET--GLU-557; 1-MET--LEU-490; 1-MET--ARG-400; 1-MET--LEU-294; 1-MET--GLN-235; 337-ASP--GLN-697 AND 440-ILE--GLN-697</scope>
    <source>
        <strain evidence="12">cv. VFNT Cherry</strain>
        <tissue evidence="12">Fruit</tissue>
    </source>
</reference>
<reference key="2">
    <citation type="journal article" date="1999" name="Plant Cell">
        <title>MAF1, a novel plant protein interacting with matrix attachment region binding protein MFP1, is located at the nuclear envelope.</title>
        <authorList>
            <person name="Gindullis F."/>
            <person name="Peffer N.J."/>
            <person name="Meier I."/>
        </authorList>
    </citation>
    <scope>INTERACTION WITH MAF1</scope>
</reference>
<reference key="3">
    <citation type="journal article" date="2003" name="Nucleic Acids Res.">
        <title>MFP1 is a thylakoid-associated, nucleoid-binding protein with a coiled-coil structure.</title>
        <authorList>
            <person name="Jeong S.Y."/>
            <person name="Rose A."/>
            <person name="Meier I."/>
        </authorList>
    </citation>
    <scope>DEVELOPMENTAL STAGE</scope>
</reference>
<reference key="4">
    <citation type="journal article" date="2006" name="Planta">
        <title>Dual location of MAR-binding, filament-like protein 1 in Arabidopsis, tobacco, and tomato.</title>
        <authorList>
            <person name="Samaniego R."/>
            <person name="Jeong S.Y."/>
            <person name="Meier I."/>
            <person name="de la Espina S.M."/>
        </authorList>
    </citation>
    <scope>SUBCELLULAR LOCATION</scope>
    <source>
        <strain evidence="11">cv. Rutgers</strain>
    </source>
</reference>
<proteinExistence type="evidence at protein level"/>
<feature type="transit peptide" description="Chloroplast" evidence="3">
    <location>
        <begin position="1"/>
        <end position="41"/>
    </location>
</feature>
<feature type="transit peptide" description="Thylakoid" evidence="1 3">
    <location>
        <begin position="42"/>
        <end position="79"/>
    </location>
</feature>
<feature type="chain" id="PRO_0000096461" description="MAR-binding filament-like protein 1" evidence="1 3">
    <location>
        <begin position="80"/>
        <end position="697"/>
    </location>
</feature>
<feature type="topological domain" description="Lumenal, thylakoid" evidence="1">
    <location>
        <begin position="80"/>
        <end position="106"/>
    </location>
</feature>
<feature type="transmembrane region" description="Helical" evidence="3">
    <location>
        <begin position="107"/>
        <end position="127"/>
    </location>
</feature>
<feature type="topological domain" description="Stromal" evidence="1">
    <location>
        <begin position="128"/>
        <end position="697"/>
    </location>
</feature>
<feature type="region of interest" description="Disordered" evidence="4">
    <location>
        <begin position="81"/>
        <end position="100"/>
    </location>
</feature>
<feature type="region of interest" description="Disordered" evidence="4">
    <location>
        <begin position="599"/>
        <end position="629"/>
    </location>
</feature>
<feature type="coiled-coil region" evidence="3">
    <location>
        <begin position="203"/>
        <end position="671"/>
    </location>
</feature>
<feature type="compositionally biased region" description="Basic and acidic residues" evidence="4">
    <location>
        <begin position="604"/>
        <end position="615"/>
    </location>
</feature>
<feature type="compositionally biased region" description="Polar residues" evidence="4">
    <location>
        <begin position="616"/>
        <end position="627"/>
    </location>
</feature>
<feature type="mutagenesis site" description="Strongly reduced DNA-binding." evidence="8">
    <location>
        <begin position="1"/>
        <end position="557"/>
    </location>
</feature>
<feature type="mutagenesis site" description="Binds DNA." evidence="8">
    <location>
        <begin position="1"/>
        <end position="490"/>
    </location>
</feature>
<feature type="mutagenesis site" description="Binds DNA." evidence="8">
    <location>
        <begin position="1"/>
        <end position="400"/>
    </location>
</feature>
<feature type="mutagenesis site" description="Binds DNA." evidence="8">
    <location>
        <begin position="1"/>
        <end position="294"/>
    </location>
</feature>
<feature type="mutagenesis site" description="Loss of DNA-binding; when associated with 440-I--Q-697." evidence="8">
    <location>
        <begin position="1"/>
        <end position="235"/>
    </location>
</feature>
<feature type="mutagenesis site" description="Loss of DNA-binding." evidence="8">
    <location>
        <begin position="337"/>
        <end position="697"/>
    </location>
</feature>
<feature type="mutagenesis site" description="Loss of DNA-binding; when associated with 1-M--Q-235." evidence="8">
    <location>
        <begin position="440"/>
        <end position="697"/>
    </location>
</feature>
<protein>
    <recommendedName>
        <fullName evidence="9 11 12">MAR-binding filament-like protein 1</fullName>
    </recommendedName>
    <alternativeName>
        <fullName evidence="9 11 12">Matrix attachment region-binding filament-like protein 1</fullName>
    </alternativeName>
</protein>
<organism>
    <name type="scientific">Solanum lycopersicum</name>
    <name type="common">Tomato</name>
    <name type="synonym">Lycopersicon esculentum</name>
    <dbReference type="NCBI Taxonomy" id="4081"/>
    <lineage>
        <taxon>Eukaryota</taxon>
        <taxon>Viridiplantae</taxon>
        <taxon>Streptophyta</taxon>
        <taxon>Embryophyta</taxon>
        <taxon>Tracheophyta</taxon>
        <taxon>Spermatophyta</taxon>
        <taxon>Magnoliopsida</taxon>
        <taxon>eudicotyledons</taxon>
        <taxon>Gunneridae</taxon>
        <taxon>Pentapetalae</taxon>
        <taxon>asterids</taxon>
        <taxon>lamiids</taxon>
        <taxon>Solanales</taxon>
        <taxon>Solanaceae</taxon>
        <taxon>Solanoideae</taxon>
        <taxon>Solaneae</taxon>
        <taxon>Solanum</taxon>
        <taxon>Solanum subgen. Lycopersicon</taxon>
    </lineage>
</organism>
<gene>
    <name evidence="9 10 11 12" type="primary">MFP1</name>
</gene>
<sequence length="697" mass="79517">MATSCFPPFSASSSSLCSSQFTPLLSCPRNTQICRKKRPVMASMHSENQKESNVCNRRSILFVGFSVLPLLNLRARALEGLSTDSQAQPQKEETEQTIQGSAGNPFVSLLNGLGVVGSGVLGSLYALARNEKAVSDATIESMKNKLKDKEDAFVSMKKQFESELLSEREDRNKLIRREGEERQALVNQLKSAKTTVISLGQELQNEKKLAEDLKFEIKGLQNDLMNTKEDKKKLQEELKEKLDLIQVLEEKITLLTTEIKDKEVSLRSNTSKLAEKESEVNSLSDMYQQSQDQLMNLTSEIKELKDEIQKRERELELKCVSEDNLNVQLNSLLLERDESKKELHAIQKEYSEFKSNSDEKVASDATLGEQEKRLHQLEEQLGTALSEASKNEVLIADLTREKENLRRMVDAELDNVNKLKQEIEVTQESLENSRSEVSDITVQLEQLRDLSSKLEREVSKLQMELEETRASLQRNIDETKHSSELLAAELTTTKELLKKTNEEMHTMSDELVAVSENRDSLQTELVNVYKKREHTRNELKQEKTIVRTLEEELKFLESQITREKELRKSLEDELEKATESLDEINRNVLALAEELELATSRNSSLEDEREVHRQSVSEQKQISQEAQENLEDAHSLVMKLGKERESLEKRAKKLEDEMAAAKGEILRLRSQINSVKAPVEDEEKVVAGEKEKVNVQQ</sequence>
<evidence type="ECO:0000250" key="1">
    <source>
        <dbReference type="UniProtKB" id="Q9LW85"/>
    </source>
</evidence>
<evidence type="ECO:0000250" key="2">
    <source>
        <dbReference type="UniProtKB" id="Q9M7J4"/>
    </source>
</evidence>
<evidence type="ECO:0000255" key="3"/>
<evidence type="ECO:0000256" key="4">
    <source>
        <dbReference type="SAM" id="MobiDB-lite"/>
    </source>
</evidence>
<evidence type="ECO:0000269" key="5">
    <source>
    </source>
</evidence>
<evidence type="ECO:0000269" key="6">
    <source>
    </source>
</evidence>
<evidence type="ECO:0000269" key="7">
    <source>
    </source>
</evidence>
<evidence type="ECO:0000269" key="8">
    <source>
    </source>
</evidence>
<evidence type="ECO:0000303" key="9">
    <source>
    </source>
</evidence>
<evidence type="ECO:0000303" key="10">
    <source>
    </source>
</evidence>
<evidence type="ECO:0000303" key="11">
    <source>
    </source>
</evidence>
<evidence type="ECO:0000303" key="12">
    <source>
    </source>
</evidence>
<dbReference type="EMBL" id="Y07861">
    <property type="protein sequence ID" value="CAA69181.1"/>
    <property type="molecule type" value="mRNA"/>
</dbReference>
<dbReference type="PIR" id="T07111">
    <property type="entry name" value="T07111"/>
</dbReference>
<dbReference type="SMR" id="P93203"/>
<dbReference type="FunCoup" id="P93203">
    <property type="interactions" value="1390"/>
</dbReference>
<dbReference type="IntAct" id="P93203">
    <property type="interactions" value="1"/>
</dbReference>
<dbReference type="STRING" id="4081.P93203"/>
<dbReference type="PaxDb" id="4081-Solyc03g120230.2.1"/>
<dbReference type="eggNOG" id="ENOG502QZ3X">
    <property type="taxonomic scope" value="Eukaryota"/>
</dbReference>
<dbReference type="InParanoid" id="P93203"/>
<dbReference type="Proteomes" id="UP000004994">
    <property type="component" value="Unplaced"/>
</dbReference>
<dbReference type="ExpressionAtlas" id="P93203">
    <property type="expression patterns" value="baseline"/>
</dbReference>
<dbReference type="GO" id="GO:0042644">
    <property type="term" value="C:chloroplast nucleoid"/>
    <property type="evidence" value="ECO:0007669"/>
    <property type="project" value="UniProtKB-SubCell"/>
</dbReference>
<dbReference type="GO" id="GO:0009535">
    <property type="term" value="C:chloroplast thylakoid membrane"/>
    <property type="evidence" value="ECO:0007669"/>
    <property type="project" value="UniProtKB-SubCell"/>
</dbReference>
<dbReference type="GO" id="GO:0016363">
    <property type="term" value="C:nuclear matrix"/>
    <property type="evidence" value="ECO:0007669"/>
    <property type="project" value="UniProtKB-SubCell"/>
</dbReference>
<dbReference type="GO" id="GO:0003677">
    <property type="term" value="F:DNA binding"/>
    <property type="evidence" value="ECO:0007669"/>
    <property type="project" value="UniProtKB-KW"/>
</dbReference>
<dbReference type="GO" id="GO:0019252">
    <property type="term" value="P:starch biosynthetic process"/>
    <property type="evidence" value="ECO:0007669"/>
    <property type="project" value="UniProtKB-KW"/>
</dbReference>
<dbReference type="Gene3D" id="1.10.287.1490">
    <property type="match status" value="1"/>
</dbReference>
<dbReference type="PANTHER" id="PTHR43941:SF5">
    <property type="entry name" value="ELKS_RAB6-INTERACTING_CAST FAMILY PROTEIN"/>
    <property type="match status" value="1"/>
</dbReference>
<dbReference type="PANTHER" id="PTHR43941">
    <property type="entry name" value="STRUCTURAL MAINTENANCE OF CHROMOSOMES PROTEIN 2"/>
    <property type="match status" value="1"/>
</dbReference>